<accession>B3QQS3</accession>
<name>RL7_CHLP8</name>
<feature type="chain" id="PRO_1000121409" description="Large ribosomal subunit protein bL12">
    <location>
        <begin position="1"/>
        <end position="126"/>
    </location>
</feature>
<gene>
    <name evidence="1" type="primary">rplL</name>
    <name type="ordered locus">Cpar_1884</name>
</gene>
<sequence>MSSIETLVEEIGKLTLTEASELVKALEEKFGVSAAPAVVAGGMAAAPAGEAAAAEEKTEFDVVLKAAGAQKINVIKVVRAITGLGLKEAKEMVDGAPKTVKEAVSKDEAEKIAKELKDAGAEVELN</sequence>
<keyword id="KW-0687">Ribonucleoprotein</keyword>
<keyword id="KW-0689">Ribosomal protein</keyword>
<evidence type="ECO:0000255" key="1">
    <source>
        <dbReference type="HAMAP-Rule" id="MF_00368"/>
    </source>
</evidence>
<evidence type="ECO:0000305" key="2"/>
<proteinExistence type="inferred from homology"/>
<dbReference type="EMBL" id="CP001099">
    <property type="protein sequence ID" value="ACF12276.1"/>
    <property type="molecule type" value="Genomic_DNA"/>
</dbReference>
<dbReference type="RefSeq" id="WP_012503109.1">
    <property type="nucleotide sequence ID" value="NC_011027.1"/>
</dbReference>
<dbReference type="SMR" id="B3QQS3"/>
<dbReference type="STRING" id="517417.Cpar_1884"/>
<dbReference type="KEGG" id="cpc:Cpar_1884"/>
<dbReference type="eggNOG" id="COG0222">
    <property type="taxonomic scope" value="Bacteria"/>
</dbReference>
<dbReference type="HOGENOM" id="CLU_086499_3_2_10"/>
<dbReference type="OrthoDB" id="9811748at2"/>
<dbReference type="Proteomes" id="UP000008811">
    <property type="component" value="Chromosome"/>
</dbReference>
<dbReference type="GO" id="GO:0022625">
    <property type="term" value="C:cytosolic large ribosomal subunit"/>
    <property type="evidence" value="ECO:0007669"/>
    <property type="project" value="TreeGrafter"/>
</dbReference>
<dbReference type="GO" id="GO:0003729">
    <property type="term" value="F:mRNA binding"/>
    <property type="evidence" value="ECO:0007669"/>
    <property type="project" value="TreeGrafter"/>
</dbReference>
<dbReference type="GO" id="GO:0003735">
    <property type="term" value="F:structural constituent of ribosome"/>
    <property type="evidence" value="ECO:0007669"/>
    <property type="project" value="InterPro"/>
</dbReference>
<dbReference type="GO" id="GO:0006412">
    <property type="term" value="P:translation"/>
    <property type="evidence" value="ECO:0007669"/>
    <property type="project" value="UniProtKB-UniRule"/>
</dbReference>
<dbReference type="CDD" id="cd00387">
    <property type="entry name" value="Ribosomal_L7_L12"/>
    <property type="match status" value="1"/>
</dbReference>
<dbReference type="FunFam" id="3.30.1390.10:FF:000001">
    <property type="entry name" value="50S ribosomal protein L7/L12"/>
    <property type="match status" value="1"/>
</dbReference>
<dbReference type="Gene3D" id="3.30.1390.10">
    <property type="match status" value="1"/>
</dbReference>
<dbReference type="Gene3D" id="1.20.5.710">
    <property type="entry name" value="Single helix bin"/>
    <property type="match status" value="1"/>
</dbReference>
<dbReference type="HAMAP" id="MF_00368">
    <property type="entry name" value="Ribosomal_bL12"/>
    <property type="match status" value="1"/>
</dbReference>
<dbReference type="InterPro" id="IPR000206">
    <property type="entry name" value="Ribosomal_bL12"/>
</dbReference>
<dbReference type="InterPro" id="IPR013823">
    <property type="entry name" value="Ribosomal_bL12_C"/>
</dbReference>
<dbReference type="InterPro" id="IPR014719">
    <property type="entry name" value="Ribosomal_bL12_C/ClpS-like"/>
</dbReference>
<dbReference type="InterPro" id="IPR008932">
    <property type="entry name" value="Ribosomal_bL12_oligo"/>
</dbReference>
<dbReference type="InterPro" id="IPR036235">
    <property type="entry name" value="Ribosomal_bL12_oligo_N_sf"/>
</dbReference>
<dbReference type="NCBIfam" id="TIGR00855">
    <property type="entry name" value="L12"/>
    <property type="match status" value="1"/>
</dbReference>
<dbReference type="PANTHER" id="PTHR45987">
    <property type="entry name" value="39S RIBOSOMAL PROTEIN L12"/>
    <property type="match status" value="1"/>
</dbReference>
<dbReference type="PANTHER" id="PTHR45987:SF4">
    <property type="entry name" value="LARGE RIBOSOMAL SUBUNIT PROTEIN BL12M"/>
    <property type="match status" value="1"/>
</dbReference>
<dbReference type="Pfam" id="PF00542">
    <property type="entry name" value="Ribosomal_L12"/>
    <property type="match status" value="1"/>
</dbReference>
<dbReference type="Pfam" id="PF16320">
    <property type="entry name" value="Ribosomal_L12_N"/>
    <property type="match status" value="1"/>
</dbReference>
<dbReference type="SUPFAM" id="SSF54736">
    <property type="entry name" value="ClpS-like"/>
    <property type="match status" value="1"/>
</dbReference>
<dbReference type="SUPFAM" id="SSF48300">
    <property type="entry name" value="Ribosomal protein L7/12, oligomerisation (N-terminal) domain"/>
    <property type="match status" value="1"/>
</dbReference>
<organism>
    <name type="scientific">Chlorobaculum parvum (strain DSM 263 / NCIMB 8327)</name>
    <name type="common">Chlorobium vibrioforme subsp. thiosulfatophilum</name>
    <dbReference type="NCBI Taxonomy" id="517417"/>
    <lineage>
        <taxon>Bacteria</taxon>
        <taxon>Pseudomonadati</taxon>
        <taxon>Chlorobiota</taxon>
        <taxon>Chlorobiia</taxon>
        <taxon>Chlorobiales</taxon>
        <taxon>Chlorobiaceae</taxon>
        <taxon>Chlorobaculum</taxon>
    </lineage>
</organism>
<comment type="function">
    <text evidence="1">Forms part of the ribosomal stalk which helps the ribosome interact with GTP-bound translation factors. Is thus essential for accurate translation.</text>
</comment>
<comment type="subunit">
    <text evidence="1">Homodimer. Part of the ribosomal stalk of the 50S ribosomal subunit. Forms a multimeric L10(L12)X complex, where L10 forms an elongated spine to which 2 to 4 L12 dimers bind in a sequential fashion. Binds GTP-bound translation factors.</text>
</comment>
<comment type="similarity">
    <text evidence="1">Belongs to the bacterial ribosomal protein bL12 family.</text>
</comment>
<protein>
    <recommendedName>
        <fullName evidence="1">Large ribosomal subunit protein bL12</fullName>
    </recommendedName>
    <alternativeName>
        <fullName evidence="2">50S ribosomal protein L7/L12</fullName>
    </alternativeName>
</protein>
<reference key="1">
    <citation type="submission" date="2008-06" db="EMBL/GenBank/DDBJ databases">
        <title>Complete sequence of Chlorobaculum parvum NCIB 8327.</title>
        <authorList>
            <consortium name="US DOE Joint Genome Institute"/>
            <person name="Lucas S."/>
            <person name="Copeland A."/>
            <person name="Lapidus A."/>
            <person name="Glavina del Rio T."/>
            <person name="Dalin E."/>
            <person name="Tice H."/>
            <person name="Bruce D."/>
            <person name="Goodwin L."/>
            <person name="Pitluck S."/>
            <person name="Schmutz J."/>
            <person name="Larimer F."/>
            <person name="Land M."/>
            <person name="Hauser L."/>
            <person name="Kyrpides N."/>
            <person name="Mikhailova N."/>
            <person name="Zhao F."/>
            <person name="Li T."/>
            <person name="Liu Z."/>
            <person name="Overmann J."/>
            <person name="Bryant D.A."/>
            <person name="Richardson P."/>
        </authorList>
    </citation>
    <scope>NUCLEOTIDE SEQUENCE [LARGE SCALE GENOMIC DNA]</scope>
    <source>
        <strain>DSM 263 / NCIMB 8327</strain>
    </source>
</reference>